<gene>
    <name type="primary">oadG</name>
    <name type="ordered locus">PM1421</name>
</gene>
<evidence type="ECO:0000250" key="1"/>
<evidence type="ECO:0000255" key="2"/>
<evidence type="ECO:0000305" key="3"/>
<keyword id="KW-1003">Cell membrane</keyword>
<keyword id="KW-0406">Ion transport</keyword>
<keyword id="KW-0472">Membrane</keyword>
<keyword id="KW-1185">Reference proteome</keyword>
<keyword id="KW-0915">Sodium</keyword>
<keyword id="KW-0739">Sodium transport</keyword>
<keyword id="KW-1278">Translocase</keyword>
<keyword id="KW-0812">Transmembrane</keyword>
<keyword id="KW-1133">Transmembrane helix</keyword>
<keyword id="KW-0813">Transport</keyword>
<protein>
    <recommendedName>
        <fullName>Probable oxaloacetate decarboxylase gamma chain</fullName>
        <ecNumber>7.2.4.2</ecNumber>
    </recommendedName>
</protein>
<reference key="1">
    <citation type="journal article" date="2001" name="Proc. Natl. Acad. Sci. U.S.A.">
        <title>Complete genomic sequence of Pasteurella multocida Pm70.</title>
        <authorList>
            <person name="May B.J."/>
            <person name="Zhang Q."/>
            <person name="Li L.L."/>
            <person name="Paustian M.L."/>
            <person name="Whittam T.S."/>
            <person name="Kapur V."/>
        </authorList>
    </citation>
    <scope>NUCLEOTIDE SEQUENCE [LARGE SCALE GENOMIC DNA]</scope>
    <source>
        <strain>Pm70</strain>
    </source>
</reference>
<dbReference type="EC" id="7.2.4.2"/>
<dbReference type="EMBL" id="AE004439">
    <property type="protein sequence ID" value="AAK03505.1"/>
    <property type="molecule type" value="Genomic_DNA"/>
</dbReference>
<dbReference type="RefSeq" id="WP_010907157.1">
    <property type="nucleotide sequence ID" value="NC_002663.1"/>
</dbReference>
<dbReference type="SMR" id="Q9CL26"/>
<dbReference type="STRING" id="272843.PM1421"/>
<dbReference type="EnsemblBacteria" id="AAK03505">
    <property type="protein sequence ID" value="AAK03505"/>
    <property type="gene ID" value="PM1421"/>
</dbReference>
<dbReference type="KEGG" id="pmu:PM1421"/>
<dbReference type="PATRIC" id="fig|272843.6.peg.1434"/>
<dbReference type="HOGENOM" id="CLU_168750_3_2_6"/>
<dbReference type="OrthoDB" id="5772594at2"/>
<dbReference type="Proteomes" id="UP000000809">
    <property type="component" value="Chromosome"/>
</dbReference>
<dbReference type="GO" id="GO:0005886">
    <property type="term" value="C:plasma membrane"/>
    <property type="evidence" value="ECO:0007669"/>
    <property type="project" value="UniProtKB-SubCell"/>
</dbReference>
<dbReference type="GO" id="GO:0015451">
    <property type="term" value="F:decarboxylation-driven active transmembrane transporter activity"/>
    <property type="evidence" value="ECO:0007669"/>
    <property type="project" value="UniProtKB-EC"/>
</dbReference>
<dbReference type="GO" id="GO:0008948">
    <property type="term" value="F:oxaloacetate decarboxylase activity"/>
    <property type="evidence" value="ECO:0007669"/>
    <property type="project" value="UniProtKB-UniRule"/>
</dbReference>
<dbReference type="GO" id="GO:0015081">
    <property type="term" value="F:sodium ion transmembrane transporter activity"/>
    <property type="evidence" value="ECO:0007669"/>
    <property type="project" value="UniProtKB-UniRule"/>
</dbReference>
<dbReference type="GO" id="GO:0036376">
    <property type="term" value="P:sodium ion export across plasma membrane"/>
    <property type="evidence" value="ECO:0007669"/>
    <property type="project" value="InterPro"/>
</dbReference>
<dbReference type="HAMAP" id="MF_00404">
    <property type="entry name" value="OadG"/>
    <property type="match status" value="1"/>
</dbReference>
<dbReference type="InterPro" id="IPR005899">
    <property type="entry name" value="Na_pump_deCOase"/>
</dbReference>
<dbReference type="InterPro" id="IPR023424">
    <property type="entry name" value="OadG"/>
</dbReference>
<dbReference type="NCBIfam" id="TIGR01195">
    <property type="entry name" value="oadG_fam"/>
    <property type="match status" value="1"/>
</dbReference>
<dbReference type="NCBIfam" id="NF002792">
    <property type="entry name" value="PRK02919.1"/>
    <property type="match status" value="1"/>
</dbReference>
<dbReference type="Pfam" id="PF04277">
    <property type="entry name" value="OAD_gamma"/>
    <property type="match status" value="1"/>
</dbReference>
<comment type="function">
    <text evidence="1">Catalyzes the decarboxylation of oxaloacetate coupled to Na(+) translocation.</text>
</comment>
<comment type="catalytic activity">
    <reaction>
        <text>oxaloacetate + 2 Na(+)(in) + H(+) = pyruvate + 2 Na(+)(out) + CO2</text>
        <dbReference type="Rhea" id="RHEA:57724"/>
        <dbReference type="ChEBI" id="CHEBI:15361"/>
        <dbReference type="ChEBI" id="CHEBI:15378"/>
        <dbReference type="ChEBI" id="CHEBI:16452"/>
        <dbReference type="ChEBI" id="CHEBI:16526"/>
        <dbReference type="ChEBI" id="CHEBI:29101"/>
        <dbReference type="EC" id="7.2.4.2"/>
    </reaction>
</comment>
<comment type="cofactor">
    <cofactor evidence="1">
        <name>Na(+)</name>
        <dbReference type="ChEBI" id="CHEBI:29101"/>
    </cofactor>
</comment>
<comment type="subunit">
    <text evidence="1">Heterotrimer of an alpha, a beta and a gamma subunit.</text>
</comment>
<comment type="subcellular location">
    <subcellularLocation>
        <location evidence="1">Cell membrane</location>
        <topology evidence="1">Single-pass membrane protein</topology>
    </subcellularLocation>
</comment>
<comment type="similarity">
    <text evidence="3">Belongs to the OadG family.</text>
</comment>
<proteinExistence type="inferred from homology"/>
<feature type="chain" id="PRO_0000216453" description="Probable oxaloacetate decarboxylase gamma chain">
    <location>
        <begin position="1"/>
        <end position="83"/>
    </location>
</feature>
<feature type="transmembrane region" description="Helical" evidence="2">
    <location>
        <begin position="10"/>
        <end position="32"/>
    </location>
</feature>
<organism>
    <name type="scientific">Pasteurella multocida (strain Pm70)</name>
    <dbReference type="NCBI Taxonomy" id="272843"/>
    <lineage>
        <taxon>Bacteria</taxon>
        <taxon>Pseudomonadati</taxon>
        <taxon>Pseudomonadota</taxon>
        <taxon>Gammaproteobacteria</taxon>
        <taxon>Pasteurellales</taxon>
        <taxon>Pasteurellaceae</taxon>
        <taxon>Pasteurella</taxon>
    </lineage>
</organism>
<sequence length="83" mass="9438">MTNAELLQEGINLMFAGVGFVMLFLFILIYAIEFMSKLVNTYFPEPVKAPSTKPIQAENHDLERLRPVIVAAIAHHRRQQGLK</sequence>
<name>OADG_PASMU</name>
<accession>Q9CL26</accession>